<accession>Q9TM07</accession>
<name>YCF17_CYACA</name>
<sequence length="43" mass="5100">MPKYGFHQSTELINGRLAMLAFILSLFIEFITEQKILHFLKFL</sequence>
<gene>
    <name type="primary">ycf17</name>
    <name type="synonym">ycf21</name>
</gene>
<keyword id="KW-0148">Chlorophyll</keyword>
<keyword id="KW-0150">Chloroplast</keyword>
<keyword id="KW-0157">Chromophore</keyword>
<keyword id="KW-0934">Plastid</keyword>
<comment type="function">
    <text>Possible role in chlorophyll and/or carotenoid binding.</text>
</comment>
<comment type="subcellular location">
    <subcellularLocation>
        <location>Plastid</location>
        <location>Chloroplast</location>
    </subcellularLocation>
</comment>
<comment type="similarity">
    <text evidence="1">Belongs to the ELIP/psbS family.</text>
</comment>
<feature type="chain" id="PRO_0000185446" description="Uncharacterized protein Ycf17">
    <location>
        <begin position="1"/>
        <end position="43"/>
    </location>
</feature>
<proteinExistence type="inferred from homology"/>
<evidence type="ECO:0000305" key="1"/>
<reference key="1">
    <citation type="journal article" date="2000" name="J. Mol. Evol.">
        <title>The structure and gene repertoire of an ancient red algal plastid genome.</title>
        <authorList>
            <person name="Gloeckner G."/>
            <person name="Rosenthal A."/>
            <person name="Valentin K.-U."/>
        </authorList>
    </citation>
    <scope>NUCLEOTIDE SEQUENCE [LARGE SCALE GENOMIC DNA]</scope>
    <source>
        <strain>RK-1</strain>
    </source>
</reference>
<protein>
    <recommendedName>
        <fullName>Uncharacterized protein Ycf17</fullName>
    </recommendedName>
    <alternativeName>
        <fullName>ORF48</fullName>
    </alternativeName>
</protein>
<dbReference type="EMBL" id="AF022186">
    <property type="protein sequence ID" value="AAF12985.1"/>
    <property type="molecule type" value="Genomic_DNA"/>
</dbReference>
<dbReference type="RefSeq" id="NP_045110.1">
    <property type="nucleotide sequence ID" value="NC_001840.1"/>
</dbReference>
<dbReference type="SMR" id="Q9TM07"/>
<dbReference type="GeneID" id="800185"/>
<dbReference type="GO" id="GO:0009507">
    <property type="term" value="C:chloroplast"/>
    <property type="evidence" value="ECO:0007669"/>
    <property type="project" value="UniProtKB-SubCell"/>
</dbReference>
<dbReference type="GO" id="GO:0016168">
    <property type="term" value="F:chlorophyll binding"/>
    <property type="evidence" value="ECO:0007669"/>
    <property type="project" value="UniProtKB-KW"/>
</dbReference>
<dbReference type="Gene3D" id="1.10.3460.10">
    <property type="entry name" value="Chlorophyll a/b binding protein domain"/>
    <property type="match status" value="1"/>
</dbReference>
<dbReference type="InterPro" id="IPR022796">
    <property type="entry name" value="Chloroa_b-bind"/>
</dbReference>
<dbReference type="Pfam" id="PF00504">
    <property type="entry name" value="Chloroa_b-bind"/>
    <property type="match status" value="1"/>
</dbReference>
<dbReference type="SUPFAM" id="SSF103511">
    <property type="entry name" value="Chlorophyll a-b binding protein"/>
    <property type="match status" value="1"/>
</dbReference>
<organism>
    <name type="scientific">Cyanidium caldarium</name>
    <name type="common">Red alga</name>
    <dbReference type="NCBI Taxonomy" id="2771"/>
    <lineage>
        <taxon>Eukaryota</taxon>
        <taxon>Rhodophyta</taxon>
        <taxon>Bangiophyceae</taxon>
        <taxon>Cyanidiales</taxon>
        <taxon>Cyanidiaceae</taxon>
        <taxon>Cyanidium</taxon>
    </lineage>
</organism>
<geneLocation type="chloroplast"/>